<protein>
    <recommendedName>
        <fullName>Neurogenic differentiation factor 1</fullName>
        <shortName>NeuroD1</shortName>
    </recommendedName>
    <alternativeName>
        <fullName>Beta-cell E-box transcriptional activator 2</fullName>
        <shortName>Beta2</shortName>
    </alternativeName>
</protein>
<sequence>MTKSYSESGLMGEPQPQGPPSWTDECLSSQDEEHEADKKEDELEAMNAEEDSLRNGGEEEEEDEDLEEEEEEEEEEEDQKPKRRGPKKKKMTKARLERFKLRRMKANARERNRMHGLNAALDNLRKVVPCYSKTQKLSKIETLRLAKNYIWALSEILRSGKSPDLVSFVQTLCKGLSQPTTNLVAGCLQLNPRTFLPEQNPDMPPHLPTASASFPVHPYSYQSPGLPSPPYGTMDSSHVFHVKPPPHAYSAALEPFFESPLTDCTSPSFDGPLSPPLSINGNFSFKHEPSAEFEKNYAFTMHYPAATLAGPQSHGSIFSSGAAAPRCEIPIDNIMSFDSHSHHERVMSAQLNAIFHD</sequence>
<gene>
    <name type="primary">Neurod1</name>
    <name type="synonym">Neurod</name>
</gene>
<comment type="function">
    <text evidence="7 8 9 10 11 12 13 15 16 18 20 21 23 25 26">Acts as a transcriptional activator: mediates transcriptional activation by binding to E box-containing promoter consensus core sequences 5'-CANNTG-3'. Associates with the p300/CBP transcription coactivator complex to stimulate transcription of the secretin gene as well as the gene encoding the cyclin-dependent kinase inhibitor CDKN1A. Contributes to the regulation of several cell differentiation pathways, like those that promote the formation of early retinal ganglion cells, inner ear sensory neurons, granule cells forming either the cerebellum or the dentate gyrus cell layer of the hippocampus, endocrine islet cells of the pancreas and enteroendocrine cells of the small intestine. Together with PAX6 or SIX3, is required for the regulation of amacrine cell fate specification. Also required for dendrite morphogenesis and maintenance in the cerebellar cortex. Associates with chromatin to enhancer regulatory elements in genes encoding key transcriptional regulators of neurogenesis.</text>
</comment>
<comment type="subunit">
    <text evidence="2 12 17 19 24 26">Efficient DNA-binding requires dimerization with another bHLH protein (PubMed:12810726, PubMed:18069799). Heterodimer with TCF3/E47; the heterodimer is inhibited in presence of ID2, but not NR0B2, to E-box element (PubMed:18069799, PubMed:23395635). Interacts with EP300; the interaction is inhibited by NR0B2 (PubMed:9512516). Interacts with RREB1 (By similarity). Interacts with ATOH8 (PubMed:18560595).</text>
</comment>
<comment type="interaction">
    <interactant intactId="EBI-309315">
        <id>Q60867</id>
    </interactant>
    <interactant intactId="EBI-748961">
        <id>O95273</id>
        <label>CCNDBP1</label>
    </interactant>
    <organismsDiffer>true</organismsDiffer>
    <experiments>4</experiments>
</comment>
<comment type="subcellular location">
    <subcellularLocation>
        <location evidence="1">Cytoplasm</location>
    </subcellularLocation>
    <subcellularLocation>
        <location evidence="5">Nucleus</location>
    </subcellularLocation>
    <text evidence="1">In pancreatic islet cells, shuttles to the nucleus in response to glucose stimulation. Colocalizes with NR0B2 in the nucleus (By similarity).</text>
</comment>
<comment type="tissue specificity">
    <text evidence="7 10 12 14 21 25">Expressed in pancreatic beta cells, pulmonary neuroendocrine cells and retinal interneurons amacrine cells (at protein level). Expressed in endocrine cells of the pancreas. Expressed in the inner layer of cerebellar external granular layer (EGL). Expressed in the Ammon's horn (AH), which includes the CA1-CA3 pyramidal layer and in granule cells of the dentate gyrus (DG). Expressed in photoreceptors of the outer nuclear layer (ONL), in a subset of cells in the lower half of the inner nuclear layer (INL), and in a subset of cells in the ganglion cell layer (GCL) of the retina. Expressed in cholinergic and AII amacrine cell types. Expressed in differentiating neurons of both the central and peripheral nervous systems.</text>
</comment>
<comment type="developmental stage">
    <text evidence="8 9 11 23 25">Expressed in glucagon- and ghrelin-producing cells of the pancreas at 14.5 dpc. Expressed in each of the hormone-producing cells population of the pancreas, except somatostatin-producing cells at 16.5 dpc (at protein level). Expressed during embryonic development. Expressed in the earliest islet precursor cells of the pancreas at 9.5 dpc. Expressed in neuronal cells in the inner ear between 9.5 and 12.5 dpc. Expressed within the otic epithelium and among the delaminating cells migrating away from the ear to form sensory neurons at 10.5 dpc. Expressed in the upper blade of the nascent dentate gyrus at 16.5 dpc.</text>
</comment>
<comment type="induction">
    <text evidence="21 22">Up-regulated by NKX2-2 and NEUROG3.</text>
</comment>
<comment type="PTM">
    <text evidence="1 12 15">In islet cells, phosphorylated on Ser-274 upon glucose stimulation; which may be required for nuclear localization. In activated neurons, phosphorylated on Ser-336; which promotes dendritic growth (By similarity). Phosphorylated by MAPK1; phosphorylation regulates heterodimerization and DNA-binding activities. Phosphorylation on Ser-266 and Ser-274 increases transactivation on the insulin promoter in glucose-stimulated insulinoma cells.</text>
</comment>
<comment type="disruption phenotype">
    <text evidence="7 8 9 18 25">Mice are deaf and die shortly after birth due to neonatal diabetes that results from developmental and functional defects of the pancreatic endocrine cells. Show a loss of enteroendocrine cells in the small intestine, airway and alveolar epithelial cells in the lung, granular neuronal cells in the cerebellum, hippocampal dentate gyrus and sensory neurons in the inner ear due to extensive cell death that occurs during the early stages of differentiation.</text>
</comment>
<keyword id="KW-0002">3D-structure</keyword>
<keyword id="KW-0010">Activator</keyword>
<keyword id="KW-0963">Cytoplasm</keyword>
<keyword id="KW-0217">Developmental protein</keyword>
<keyword id="KW-0221">Differentiation</keyword>
<keyword id="KW-0238">DNA-binding</keyword>
<keyword id="KW-0524">Neurogenesis</keyword>
<keyword id="KW-0539">Nucleus</keyword>
<keyword id="KW-0597">Phosphoprotein</keyword>
<keyword id="KW-1185">Reference proteome</keyword>
<keyword id="KW-0804">Transcription</keyword>
<keyword id="KW-0805">Transcription regulation</keyword>
<proteinExistence type="evidence at protein level"/>
<organism>
    <name type="scientific">Mus musculus</name>
    <name type="common">Mouse</name>
    <dbReference type="NCBI Taxonomy" id="10090"/>
    <lineage>
        <taxon>Eukaryota</taxon>
        <taxon>Metazoa</taxon>
        <taxon>Chordata</taxon>
        <taxon>Craniata</taxon>
        <taxon>Vertebrata</taxon>
        <taxon>Euteleostomi</taxon>
        <taxon>Mammalia</taxon>
        <taxon>Eutheria</taxon>
        <taxon>Euarchontoglires</taxon>
        <taxon>Glires</taxon>
        <taxon>Rodentia</taxon>
        <taxon>Myomorpha</taxon>
        <taxon>Muroidea</taxon>
        <taxon>Muridae</taxon>
        <taxon>Murinae</taxon>
        <taxon>Mus</taxon>
        <taxon>Mus</taxon>
    </lineage>
</organism>
<name>NDF1_MOUSE</name>
<accession>Q60867</accession>
<accession>Q545N9</accession>
<accession>Q60897</accession>
<dbReference type="EMBL" id="U28068">
    <property type="protein sequence ID" value="AAC52203.1"/>
    <property type="molecule type" value="mRNA"/>
</dbReference>
<dbReference type="EMBL" id="U28888">
    <property type="protein sequence ID" value="AAC52204.1"/>
    <property type="molecule type" value="Genomic_DNA"/>
</dbReference>
<dbReference type="EMBL" id="AK005073">
    <property type="protein sequence ID" value="BAB23797.1"/>
    <property type="molecule type" value="mRNA"/>
</dbReference>
<dbReference type="EMBL" id="AK018781">
    <property type="protein sequence ID" value="BAB31405.1"/>
    <property type="molecule type" value="mRNA"/>
</dbReference>
<dbReference type="EMBL" id="BC018241">
    <property type="protein sequence ID" value="AAH18241.1"/>
    <property type="molecule type" value="mRNA"/>
</dbReference>
<dbReference type="CCDS" id="CCDS16169.1"/>
<dbReference type="PIR" id="I49338">
    <property type="entry name" value="I49338"/>
</dbReference>
<dbReference type="RefSeq" id="NP_035024.1">
    <property type="nucleotide sequence ID" value="NM_010894.3"/>
</dbReference>
<dbReference type="PDB" id="2QL2">
    <property type="method" value="X-ray"/>
    <property type="resolution" value="2.50 A"/>
    <property type="chains" value="B/D=102-160"/>
</dbReference>
<dbReference type="PDBsum" id="2QL2"/>
<dbReference type="SMR" id="Q60867"/>
<dbReference type="BioGRID" id="201733">
    <property type="interactions" value="12"/>
</dbReference>
<dbReference type="CORUM" id="Q60867"/>
<dbReference type="FunCoup" id="Q60867">
    <property type="interactions" value="1682"/>
</dbReference>
<dbReference type="IntAct" id="Q60867">
    <property type="interactions" value="4"/>
</dbReference>
<dbReference type="MINT" id="Q60867"/>
<dbReference type="STRING" id="10090.ENSMUSP00000040364"/>
<dbReference type="GlyGen" id="Q60867">
    <property type="glycosylation" value="1 site, 1 O-linked glycan (1 site)"/>
</dbReference>
<dbReference type="iPTMnet" id="Q60867"/>
<dbReference type="PhosphoSitePlus" id="Q60867"/>
<dbReference type="jPOST" id="Q60867"/>
<dbReference type="PaxDb" id="10090-ENSMUSP00000040364"/>
<dbReference type="ProteomicsDB" id="287623"/>
<dbReference type="Antibodypedia" id="922">
    <property type="antibodies" value="536 antibodies from 40 providers"/>
</dbReference>
<dbReference type="DNASU" id="18012"/>
<dbReference type="Ensembl" id="ENSMUST00000041099.5">
    <property type="protein sequence ID" value="ENSMUSP00000040364.5"/>
    <property type="gene ID" value="ENSMUSG00000034701.10"/>
</dbReference>
<dbReference type="GeneID" id="18012"/>
<dbReference type="KEGG" id="mmu:18012"/>
<dbReference type="UCSC" id="uc008kgt.1">
    <property type="organism name" value="mouse"/>
</dbReference>
<dbReference type="AGR" id="MGI:1339708"/>
<dbReference type="CTD" id="4760"/>
<dbReference type="MGI" id="MGI:1339708">
    <property type="gene designation" value="Neurod1"/>
</dbReference>
<dbReference type="VEuPathDB" id="HostDB:ENSMUSG00000034701"/>
<dbReference type="eggNOG" id="KOG3898">
    <property type="taxonomic scope" value="Eukaryota"/>
</dbReference>
<dbReference type="GeneTree" id="ENSGT00940000160478"/>
<dbReference type="HOGENOM" id="CLU_055134_0_0_1"/>
<dbReference type="InParanoid" id="Q60867"/>
<dbReference type="OMA" id="SFKHEPA"/>
<dbReference type="OrthoDB" id="10039134at2759"/>
<dbReference type="PhylomeDB" id="Q60867"/>
<dbReference type="TreeFam" id="TF315153"/>
<dbReference type="BioGRID-ORCS" id="18012">
    <property type="hits" value="2 hits in 79 CRISPR screens"/>
</dbReference>
<dbReference type="EvolutionaryTrace" id="Q60867"/>
<dbReference type="PRO" id="PR:Q60867"/>
<dbReference type="Proteomes" id="UP000000589">
    <property type="component" value="Chromosome 2"/>
</dbReference>
<dbReference type="RNAct" id="Q60867">
    <property type="molecule type" value="protein"/>
</dbReference>
<dbReference type="Bgee" id="ENSMUSG00000034701">
    <property type="expression patterns" value="Expressed in cerebellum lobe and 157 other cell types or tissues"/>
</dbReference>
<dbReference type="GO" id="GO:0005737">
    <property type="term" value="C:cytoplasm"/>
    <property type="evidence" value="ECO:0000314"/>
    <property type="project" value="MGI"/>
</dbReference>
<dbReference type="GO" id="GO:0005634">
    <property type="term" value="C:nucleus"/>
    <property type="evidence" value="ECO:0000314"/>
    <property type="project" value="MGI"/>
</dbReference>
<dbReference type="GO" id="GO:0090575">
    <property type="term" value="C:RNA polymerase II transcription regulator complex"/>
    <property type="evidence" value="ECO:0007669"/>
    <property type="project" value="Ensembl"/>
</dbReference>
<dbReference type="GO" id="GO:0003682">
    <property type="term" value="F:chromatin binding"/>
    <property type="evidence" value="ECO:0000314"/>
    <property type="project" value="UniProtKB"/>
</dbReference>
<dbReference type="GO" id="GO:0003677">
    <property type="term" value="F:DNA binding"/>
    <property type="evidence" value="ECO:0000314"/>
    <property type="project" value="MGI"/>
</dbReference>
<dbReference type="GO" id="GO:0001228">
    <property type="term" value="F:DNA-binding transcription activator activity, RNA polymerase II-specific"/>
    <property type="evidence" value="ECO:0000314"/>
    <property type="project" value="NTNU_SB"/>
</dbReference>
<dbReference type="GO" id="GO:0070888">
    <property type="term" value="F:E-box binding"/>
    <property type="evidence" value="ECO:0000314"/>
    <property type="project" value="UniProtKB"/>
</dbReference>
<dbReference type="GO" id="GO:0046982">
    <property type="term" value="F:protein heterodimerization activity"/>
    <property type="evidence" value="ECO:0007669"/>
    <property type="project" value="Ensembl"/>
</dbReference>
<dbReference type="GO" id="GO:0000978">
    <property type="term" value="F:RNA polymerase II cis-regulatory region sequence-specific DNA binding"/>
    <property type="evidence" value="ECO:0000314"/>
    <property type="project" value="NTNU_SB"/>
</dbReference>
<dbReference type="GO" id="GO:0061629">
    <property type="term" value="F:RNA polymerase II-specific DNA-binding transcription factor binding"/>
    <property type="evidence" value="ECO:0007669"/>
    <property type="project" value="Ensembl"/>
</dbReference>
<dbReference type="GO" id="GO:0043565">
    <property type="term" value="F:sequence-specific DNA binding"/>
    <property type="evidence" value="ECO:0000314"/>
    <property type="project" value="MGI"/>
</dbReference>
<dbReference type="GO" id="GO:0035881">
    <property type="term" value="P:amacrine cell differentiation"/>
    <property type="evidence" value="ECO:0000314"/>
    <property type="project" value="UniProtKB"/>
</dbReference>
<dbReference type="GO" id="GO:0009952">
    <property type="term" value="P:anterior/posterior pattern specification"/>
    <property type="evidence" value="ECO:0000315"/>
    <property type="project" value="MGI"/>
</dbReference>
<dbReference type="GO" id="GO:0043010">
    <property type="term" value="P:camera-type eye development"/>
    <property type="evidence" value="ECO:0000316"/>
    <property type="project" value="MGI"/>
</dbReference>
<dbReference type="GO" id="GO:0045165">
    <property type="term" value="P:cell fate commitment"/>
    <property type="evidence" value="ECO:0000316"/>
    <property type="project" value="MGI"/>
</dbReference>
<dbReference type="GO" id="GO:0007259">
    <property type="term" value="P:cell surface receptor signaling pathway via JAK-STAT"/>
    <property type="evidence" value="ECO:0000314"/>
    <property type="project" value="MGI"/>
</dbReference>
<dbReference type="GO" id="GO:0021549">
    <property type="term" value="P:cerebellum development"/>
    <property type="evidence" value="ECO:0000315"/>
    <property type="project" value="UniProtKB"/>
</dbReference>
<dbReference type="GO" id="GO:0021542">
    <property type="term" value="P:dentate gyrus development"/>
    <property type="evidence" value="ECO:0000315"/>
    <property type="project" value="UniProtKB"/>
</dbReference>
<dbReference type="GO" id="GO:0048562">
    <property type="term" value="P:embryonic organ morphogenesis"/>
    <property type="evidence" value="ECO:0000315"/>
    <property type="project" value="BHF-UCL"/>
</dbReference>
<dbReference type="GO" id="GO:0031018">
    <property type="term" value="P:endocrine pancreas development"/>
    <property type="evidence" value="ECO:0000315"/>
    <property type="project" value="UniProtKB"/>
</dbReference>
<dbReference type="GO" id="GO:0035883">
    <property type="term" value="P:enteroendocrine cell differentiation"/>
    <property type="evidence" value="ECO:0000315"/>
    <property type="project" value="UniProtKB"/>
</dbReference>
<dbReference type="GO" id="GO:0042593">
    <property type="term" value="P:glucose homeostasis"/>
    <property type="evidence" value="ECO:0000315"/>
    <property type="project" value="BHF-UCL"/>
</dbReference>
<dbReference type="GO" id="GO:0030902">
    <property type="term" value="P:hindbrain development"/>
    <property type="evidence" value="ECO:0000315"/>
    <property type="project" value="MGI"/>
</dbReference>
<dbReference type="GO" id="GO:0048839">
    <property type="term" value="P:inner ear development"/>
    <property type="evidence" value="ECO:0000315"/>
    <property type="project" value="UniProtKB"/>
</dbReference>
<dbReference type="GO" id="GO:0030073">
    <property type="term" value="P:insulin secretion"/>
    <property type="evidence" value="ECO:0007669"/>
    <property type="project" value="Ensembl"/>
</dbReference>
<dbReference type="GO" id="GO:0046426">
    <property type="term" value="P:negative regulation of receptor signaling pathway via JAK-STAT"/>
    <property type="evidence" value="ECO:0000314"/>
    <property type="project" value="MGI"/>
</dbReference>
<dbReference type="GO" id="GO:2000675">
    <property type="term" value="P:negative regulation of type B pancreatic cell apoptotic process"/>
    <property type="evidence" value="ECO:0000315"/>
    <property type="project" value="BHF-UCL"/>
</dbReference>
<dbReference type="GO" id="GO:0003326">
    <property type="term" value="P:pancreatic A cell fate commitment"/>
    <property type="evidence" value="ECO:0000316"/>
    <property type="project" value="MGI"/>
</dbReference>
<dbReference type="GO" id="GO:0003329">
    <property type="term" value="P:pancreatic PP cell fate commitment"/>
    <property type="evidence" value="ECO:0000316"/>
    <property type="project" value="MGI"/>
</dbReference>
<dbReference type="GO" id="GO:0043065">
    <property type="term" value="P:positive regulation of apoptotic process"/>
    <property type="evidence" value="ECO:0000314"/>
    <property type="project" value="UniProtKB"/>
</dbReference>
<dbReference type="GO" id="GO:0045597">
    <property type="term" value="P:positive regulation of cell differentiation"/>
    <property type="evidence" value="ECO:0000314"/>
    <property type="project" value="UniProtKB"/>
</dbReference>
<dbReference type="GO" id="GO:0051091">
    <property type="term" value="P:positive regulation of DNA-binding transcription factor activity"/>
    <property type="evidence" value="ECO:0000314"/>
    <property type="project" value="UniProtKB"/>
</dbReference>
<dbReference type="GO" id="GO:0045893">
    <property type="term" value="P:positive regulation of DNA-templated transcription"/>
    <property type="evidence" value="ECO:0000314"/>
    <property type="project" value="UniProtKB"/>
</dbReference>
<dbReference type="GO" id="GO:0045666">
    <property type="term" value="P:positive regulation of neuron differentiation"/>
    <property type="evidence" value="ECO:0000314"/>
    <property type="project" value="UniProtKB"/>
</dbReference>
<dbReference type="GO" id="GO:0045944">
    <property type="term" value="P:positive regulation of transcription by RNA polymerase II"/>
    <property type="evidence" value="ECO:0000314"/>
    <property type="project" value="UniProtKB"/>
</dbReference>
<dbReference type="GO" id="GO:0060730">
    <property type="term" value="P:regulation of intestinal epithelial structure maintenance"/>
    <property type="evidence" value="ECO:0000314"/>
    <property type="project" value="UniProtKB"/>
</dbReference>
<dbReference type="GO" id="GO:0045664">
    <property type="term" value="P:regulation of neuron differentiation"/>
    <property type="evidence" value="ECO:0000316"/>
    <property type="project" value="MGI"/>
</dbReference>
<dbReference type="GO" id="GO:0009749">
    <property type="term" value="P:response to glucose"/>
    <property type="evidence" value="ECO:0007669"/>
    <property type="project" value="Ensembl"/>
</dbReference>
<dbReference type="GO" id="GO:0023019">
    <property type="term" value="P:signal transduction involved in regulation of gene expression"/>
    <property type="evidence" value="ECO:0000314"/>
    <property type="project" value="MGI"/>
</dbReference>
<dbReference type="GO" id="GO:0006366">
    <property type="term" value="P:transcription by RNA polymerase II"/>
    <property type="evidence" value="ECO:0000315"/>
    <property type="project" value="MGI"/>
</dbReference>
<dbReference type="CDD" id="cd19719">
    <property type="entry name" value="bHLH_TS_NeuroD1"/>
    <property type="match status" value="1"/>
</dbReference>
<dbReference type="FunFam" id="4.10.280.10:FF:000006">
    <property type="entry name" value="Neurogenic differentiation factor"/>
    <property type="match status" value="1"/>
</dbReference>
<dbReference type="Gene3D" id="4.10.280.10">
    <property type="entry name" value="Helix-loop-helix DNA-binding domain"/>
    <property type="match status" value="1"/>
</dbReference>
<dbReference type="InterPro" id="IPR011598">
    <property type="entry name" value="bHLH_dom"/>
</dbReference>
<dbReference type="InterPro" id="IPR050359">
    <property type="entry name" value="bHLH_transcription_factors"/>
</dbReference>
<dbReference type="InterPro" id="IPR036638">
    <property type="entry name" value="HLH_DNA-bd_sf"/>
</dbReference>
<dbReference type="InterPro" id="IPR022575">
    <property type="entry name" value="NeuroD_DUF"/>
</dbReference>
<dbReference type="InterPro" id="IPR016637">
    <property type="entry name" value="TF_bHLH_NeuroD"/>
</dbReference>
<dbReference type="PANTHER" id="PTHR19290">
    <property type="entry name" value="BASIC HELIX-LOOP-HELIX PROTEIN NEUROGENIN-RELATED"/>
    <property type="match status" value="1"/>
</dbReference>
<dbReference type="PANTHER" id="PTHR19290:SF88">
    <property type="entry name" value="NEUROGENIC DIFFERENTIATION FACTOR 1"/>
    <property type="match status" value="1"/>
</dbReference>
<dbReference type="Pfam" id="PF00010">
    <property type="entry name" value="HLH"/>
    <property type="match status" value="1"/>
</dbReference>
<dbReference type="Pfam" id="PF12533">
    <property type="entry name" value="Neuro_bHLH"/>
    <property type="match status" value="1"/>
</dbReference>
<dbReference type="PIRSF" id="PIRSF015618">
    <property type="entry name" value="bHLH_NeuroD"/>
    <property type="match status" value="1"/>
</dbReference>
<dbReference type="SMART" id="SM00353">
    <property type="entry name" value="HLH"/>
    <property type="match status" value="1"/>
</dbReference>
<dbReference type="SUPFAM" id="SSF47459">
    <property type="entry name" value="HLH, helix-loop-helix DNA-binding domain"/>
    <property type="match status" value="1"/>
</dbReference>
<dbReference type="PROSITE" id="PS50888">
    <property type="entry name" value="BHLH"/>
    <property type="match status" value="1"/>
</dbReference>
<reference key="1">
    <citation type="journal article" date="1995" name="Science">
        <title>Conversion of Xenopus ectoderm into neurons by NeuroD, a basic helix-loop-helix protein.</title>
        <authorList>
            <person name="Lee J.E."/>
            <person name="Hollenberg S.M."/>
            <person name="Snider L."/>
            <person name="Turner D.L."/>
            <person name="Lipnick N."/>
            <person name="Weintraub H."/>
        </authorList>
    </citation>
    <scope>NUCLEOTIDE SEQUENCE [GENOMIC DNA / MRNA]</scope>
    <source>
        <strain>129/Sv</strain>
        <strain>MF1</strain>
    </source>
</reference>
<reference key="2">
    <citation type="journal article" date="2005" name="Science">
        <title>The transcriptional landscape of the mammalian genome.</title>
        <authorList>
            <person name="Carninci P."/>
            <person name="Kasukawa T."/>
            <person name="Katayama S."/>
            <person name="Gough J."/>
            <person name="Frith M.C."/>
            <person name="Maeda N."/>
            <person name="Oyama R."/>
            <person name="Ravasi T."/>
            <person name="Lenhard B."/>
            <person name="Wells C."/>
            <person name="Kodzius R."/>
            <person name="Shimokawa K."/>
            <person name="Bajic V.B."/>
            <person name="Brenner S.E."/>
            <person name="Batalov S."/>
            <person name="Forrest A.R."/>
            <person name="Zavolan M."/>
            <person name="Davis M.J."/>
            <person name="Wilming L.G."/>
            <person name="Aidinis V."/>
            <person name="Allen J.E."/>
            <person name="Ambesi-Impiombato A."/>
            <person name="Apweiler R."/>
            <person name="Aturaliya R.N."/>
            <person name="Bailey T.L."/>
            <person name="Bansal M."/>
            <person name="Baxter L."/>
            <person name="Beisel K.W."/>
            <person name="Bersano T."/>
            <person name="Bono H."/>
            <person name="Chalk A.M."/>
            <person name="Chiu K.P."/>
            <person name="Choudhary V."/>
            <person name="Christoffels A."/>
            <person name="Clutterbuck D.R."/>
            <person name="Crowe M.L."/>
            <person name="Dalla E."/>
            <person name="Dalrymple B.P."/>
            <person name="de Bono B."/>
            <person name="Della Gatta G."/>
            <person name="di Bernardo D."/>
            <person name="Down T."/>
            <person name="Engstrom P."/>
            <person name="Fagiolini M."/>
            <person name="Faulkner G."/>
            <person name="Fletcher C.F."/>
            <person name="Fukushima T."/>
            <person name="Furuno M."/>
            <person name="Futaki S."/>
            <person name="Gariboldi M."/>
            <person name="Georgii-Hemming P."/>
            <person name="Gingeras T.R."/>
            <person name="Gojobori T."/>
            <person name="Green R.E."/>
            <person name="Gustincich S."/>
            <person name="Harbers M."/>
            <person name="Hayashi Y."/>
            <person name="Hensch T.K."/>
            <person name="Hirokawa N."/>
            <person name="Hill D."/>
            <person name="Huminiecki L."/>
            <person name="Iacono M."/>
            <person name="Ikeo K."/>
            <person name="Iwama A."/>
            <person name="Ishikawa T."/>
            <person name="Jakt M."/>
            <person name="Kanapin A."/>
            <person name="Katoh M."/>
            <person name="Kawasawa Y."/>
            <person name="Kelso J."/>
            <person name="Kitamura H."/>
            <person name="Kitano H."/>
            <person name="Kollias G."/>
            <person name="Krishnan S.P."/>
            <person name="Kruger A."/>
            <person name="Kummerfeld S.K."/>
            <person name="Kurochkin I.V."/>
            <person name="Lareau L.F."/>
            <person name="Lazarevic D."/>
            <person name="Lipovich L."/>
            <person name="Liu J."/>
            <person name="Liuni S."/>
            <person name="McWilliam S."/>
            <person name="Madan Babu M."/>
            <person name="Madera M."/>
            <person name="Marchionni L."/>
            <person name="Matsuda H."/>
            <person name="Matsuzawa S."/>
            <person name="Miki H."/>
            <person name="Mignone F."/>
            <person name="Miyake S."/>
            <person name="Morris K."/>
            <person name="Mottagui-Tabar S."/>
            <person name="Mulder N."/>
            <person name="Nakano N."/>
            <person name="Nakauchi H."/>
            <person name="Ng P."/>
            <person name="Nilsson R."/>
            <person name="Nishiguchi S."/>
            <person name="Nishikawa S."/>
            <person name="Nori F."/>
            <person name="Ohara O."/>
            <person name="Okazaki Y."/>
            <person name="Orlando V."/>
            <person name="Pang K.C."/>
            <person name="Pavan W.J."/>
            <person name="Pavesi G."/>
            <person name="Pesole G."/>
            <person name="Petrovsky N."/>
            <person name="Piazza S."/>
            <person name="Reed J."/>
            <person name="Reid J.F."/>
            <person name="Ring B.Z."/>
            <person name="Ringwald M."/>
            <person name="Rost B."/>
            <person name="Ruan Y."/>
            <person name="Salzberg S.L."/>
            <person name="Sandelin A."/>
            <person name="Schneider C."/>
            <person name="Schoenbach C."/>
            <person name="Sekiguchi K."/>
            <person name="Semple C.A."/>
            <person name="Seno S."/>
            <person name="Sessa L."/>
            <person name="Sheng Y."/>
            <person name="Shibata Y."/>
            <person name="Shimada H."/>
            <person name="Shimada K."/>
            <person name="Silva D."/>
            <person name="Sinclair B."/>
            <person name="Sperling S."/>
            <person name="Stupka E."/>
            <person name="Sugiura K."/>
            <person name="Sultana R."/>
            <person name="Takenaka Y."/>
            <person name="Taki K."/>
            <person name="Tammoja K."/>
            <person name="Tan S.L."/>
            <person name="Tang S."/>
            <person name="Taylor M.S."/>
            <person name="Tegner J."/>
            <person name="Teichmann S.A."/>
            <person name="Ueda H.R."/>
            <person name="van Nimwegen E."/>
            <person name="Verardo R."/>
            <person name="Wei C.L."/>
            <person name="Yagi K."/>
            <person name="Yamanishi H."/>
            <person name="Zabarovsky E."/>
            <person name="Zhu S."/>
            <person name="Zimmer A."/>
            <person name="Hide W."/>
            <person name="Bult C."/>
            <person name="Grimmond S.M."/>
            <person name="Teasdale R.D."/>
            <person name="Liu E.T."/>
            <person name="Brusic V."/>
            <person name="Quackenbush J."/>
            <person name="Wahlestedt C."/>
            <person name="Mattick J.S."/>
            <person name="Hume D.A."/>
            <person name="Kai C."/>
            <person name="Sasaki D."/>
            <person name="Tomaru Y."/>
            <person name="Fukuda S."/>
            <person name="Kanamori-Katayama M."/>
            <person name="Suzuki M."/>
            <person name="Aoki J."/>
            <person name="Arakawa T."/>
            <person name="Iida J."/>
            <person name="Imamura K."/>
            <person name="Itoh M."/>
            <person name="Kato T."/>
            <person name="Kawaji H."/>
            <person name="Kawagashira N."/>
            <person name="Kawashima T."/>
            <person name="Kojima M."/>
            <person name="Kondo S."/>
            <person name="Konno H."/>
            <person name="Nakano K."/>
            <person name="Ninomiya N."/>
            <person name="Nishio T."/>
            <person name="Okada M."/>
            <person name="Plessy C."/>
            <person name="Shibata K."/>
            <person name="Shiraki T."/>
            <person name="Suzuki S."/>
            <person name="Tagami M."/>
            <person name="Waki K."/>
            <person name="Watahiki A."/>
            <person name="Okamura-Oho Y."/>
            <person name="Suzuki H."/>
            <person name="Kawai J."/>
            <person name="Hayashizaki Y."/>
        </authorList>
    </citation>
    <scope>NUCLEOTIDE SEQUENCE [LARGE SCALE MRNA]</scope>
    <source>
        <strain>C57BL/6J</strain>
        <tissue>Cerebellum</tissue>
    </source>
</reference>
<reference key="3">
    <citation type="journal article" date="2004" name="Genome Res.">
        <title>The status, quality, and expansion of the NIH full-length cDNA project: the Mammalian Gene Collection (MGC).</title>
        <authorList>
            <consortium name="The MGC Project Team"/>
        </authorList>
    </citation>
    <scope>NUCLEOTIDE SEQUENCE [LARGE SCALE MRNA]</scope>
    <source>
        <tissue>Eye</tissue>
    </source>
</reference>
<reference key="4">
    <citation type="journal article" date="1997" name="Genes Dev.">
        <title>Diabetes, defective pancreatic morphogenesis, and abnormal enteroendocrine differentiation in BETA2/neuroD-deficient mice.</title>
        <authorList>
            <person name="Naya F.J."/>
            <person name="Huang H.P."/>
            <person name="Qiu Y."/>
            <person name="Mutoh H."/>
            <person name="DeMayo F.J."/>
            <person name="Leiter A.B."/>
            <person name="Tsai M.J."/>
        </authorList>
    </citation>
    <scope>FUNCTION</scope>
    <scope>DISRUPTION PHENOTYPE</scope>
    <scope>TISSUE SPECIFICITY</scope>
    <scope>DEVELOPMENTAL STAGE</scope>
</reference>
<reference key="5">
    <citation type="journal article" date="1998" name="Genes Dev.">
        <title>The basic helix-loop-helix protein BETA2 interacts with p300 to coordinate differentiation of secretin-expressing enteroendocrine cells.</title>
        <authorList>
            <person name="Mutoh H."/>
            <person name="Naya F.J."/>
            <person name="Tsai M.J."/>
            <person name="Leiter A.B."/>
        </authorList>
    </citation>
    <scope>FUNCTION</scope>
    <scope>INTERACTION WITH EP300</scope>
    <scope>DNA-BINDING</scope>
</reference>
<reference key="6">
    <citation type="journal article" date="1999" name="Genes Dev.">
        <title>NeuroD is required for differentiation of the granule cells in the cerebellum and hippocampus.</title>
        <authorList>
            <person name="Miyata T."/>
            <person name="Maeda T."/>
            <person name="Lee J.E."/>
        </authorList>
    </citation>
    <scope>FUNCTION</scope>
    <scope>DISRUPTION PHENOTYPE</scope>
    <scope>TISSUE SPECIFICITY</scope>
</reference>
<reference key="7">
    <citation type="journal article" date="2000" name="Proc. Natl. Acad. Sci. U.S.A.">
        <title>Loss of BETA2/NeuroD leads to malformation of the dentate gyrus and epilepsy.</title>
        <authorList>
            <person name="Liu M."/>
            <person name="Pleasure S.J."/>
            <person name="Collins A.E."/>
            <person name="Noebels J.L."/>
            <person name="Naya F.J."/>
            <person name="Tsai M.J."/>
            <person name="Lowenstein D.H."/>
        </authorList>
    </citation>
    <scope>FUNCTION</scope>
    <scope>DISRUPTION PHENOTYPE</scope>
    <scope>DEVELOPMENTAL STAGE</scope>
</reference>
<reference key="8">
    <citation type="journal article" date="2001" name="Development">
        <title>NeuroD-null mice are deaf due to a severe loss of the inner ear sensory neurons during development.</title>
        <authorList>
            <person name="Kim W.Y."/>
            <person name="Fritzsch B."/>
            <person name="Serls A."/>
            <person name="Bakel L.A."/>
            <person name="Huang E.J."/>
            <person name="Reichardt L.F."/>
            <person name="Barth D.S."/>
            <person name="Lee J.E."/>
        </authorList>
    </citation>
    <scope>FUNCTION</scope>
    <scope>DISRUPTION PHENOTYPE</scope>
    <scope>DEVELOPMENTAL STAGE</scope>
</reference>
<reference key="9">
    <citation type="journal article" date="2002" name="Development">
        <title>Math3 and NeuroD regulate amacrine cell fate specification in the retina.</title>
        <authorList>
            <person name="Inoue T."/>
            <person name="Hojo M."/>
            <person name="Bessho Y."/>
            <person name="Tano Y."/>
            <person name="Lee J.E."/>
            <person name="Kageyama R."/>
        </authorList>
    </citation>
    <scope>FUNCTION</scope>
    <scope>TISSUE SPECIFICITY</scope>
</reference>
<reference key="10">
    <citation type="journal article" date="2002" name="Neuron">
        <title>Posttranslational mechanisms control the timing of bHLH function and regulate retinal cell fate.</title>
        <authorList>
            <person name="Moore K.B."/>
            <person name="Schneider M.L."/>
            <person name="Vetter M.L."/>
        </authorList>
    </citation>
    <scope>FUNCTION</scope>
    <scope>MUTAGENESIS OF 274-SER--SER-278</scope>
    <scope>DEVELOPMENTAL STAGE</scope>
</reference>
<reference key="11">
    <citation type="journal article" date="2003" name="J. Biol. Chem.">
        <title>Regulation of insulin gene transcription by ERK1 and ERK2 in pancreatic beta cells.</title>
        <authorList>
            <person name="Khoo S."/>
            <person name="Griffen S.C."/>
            <person name="Xia Y."/>
            <person name="Baer R.J."/>
            <person name="German M.S."/>
            <person name="Cobb M.H."/>
        </authorList>
    </citation>
    <scope>FUNCTION</scope>
    <scope>HETERODIMERIZATION</scope>
    <scope>PHOSPHORYLATION AT SER-162; SER-259; SER-266 AND SER-274</scope>
    <scope>TISSUE SPECIFICITY</scope>
    <scope>MUTAGENESIS OF SER-162; SER-259; SER-266 AND SER-274</scope>
</reference>
<reference key="12">
    <citation type="journal article" date="2004" name="Dev. Biol.">
        <title>Regulation of neuroD2 expression in mouse brain.</title>
        <authorList>
            <person name="Lin C.H."/>
            <person name="Stoeck J."/>
            <person name="Ravanpay A.C."/>
            <person name="Guillemot F."/>
            <person name="Tapscott S.J."/>
            <person name="Olson J.M."/>
        </authorList>
    </citation>
    <scope>FUNCTION</scope>
    <scope>DNA-BINDING</scope>
</reference>
<reference key="13">
    <citation type="journal article" date="2004" name="Mol. Endocrinol.">
        <title>Orphan nuclear receptor small heterodimer partner, a novel corepressor for a basic helix-loop-helix transcription factor BETA2/neuroD.</title>
        <authorList>
            <person name="Kim J.Y."/>
            <person name="Chu K."/>
            <person name="Kim H.J."/>
            <person name="Seong H.A."/>
            <person name="Park K.C."/>
            <person name="Sanyal S."/>
            <person name="Takeda J."/>
            <person name="Ha H."/>
            <person name="Shong M."/>
            <person name="Tsai M.J."/>
            <person name="Choi H.S."/>
        </authorList>
    </citation>
    <scope>TISSUE SPECIFICITY</scope>
</reference>
<reference key="14">
    <citation type="journal article" date="2005" name="Mol. Cell. Neurosci.">
        <title>Context-dependent regulation of NeuroD activity and protein accumulation.</title>
        <authorList>
            <person name="Dufton C."/>
            <person name="Marcora E."/>
            <person name="Chae J.H."/>
            <person name="McCullough J."/>
            <person name="Eby J."/>
            <person name="Hausburg M."/>
            <person name="Stein G.H."/>
            <person name="Khoo S."/>
            <person name="Cobb M.H."/>
            <person name="Lee J.E."/>
        </authorList>
    </citation>
    <scope>FUNCTION</scope>
    <scope>PHOSPHORYLATION AT SER-259; SER-266 AND SER-274</scope>
    <scope>MUTAGENESIS OF SER-259; SER-266 AND SER-274</scope>
</reference>
<reference key="15">
    <citation type="journal article" date="2007" name="EMBO J.">
        <title>Neurogenin and NeuroD direct transcriptional targets and their regulatory enhancers.</title>
        <authorList>
            <person name="Seo S."/>
            <person name="Lim J.W."/>
            <person name="Yellajoshyula D."/>
            <person name="Chang L.W."/>
            <person name="Kroll K.L."/>
        </authorList>
    </citation>
    <scope>FUNCTION</scope>
    <scope>ASSOCIATION WITH CHROMATIN</scope>
</reference>
<reference key="16">
    <citation type="journal article" date="2008" name="J. Biol. Chem.">
        <title>Targeted disruption of NeuroD, a proneural basic helix-loop-helix factor, impairs distal lung formation and neuroendocrine morphology in the neonatal lung.</title>
        <authorList>
            <person name="Neptune E.R."/>
            <person name="Podowski M."/>
            <person name="Calvi C."/>
            <person name="Cho J.H."/>
            <person name="Garcia J.G."/>
            <person name="Tuder R."/>
            <person name="Linnoila R.I."/>
            <person name="Tsai M.J."/>
            <person name="Dietz H.C."/>
        </authorList>
    </citation>
    <scope>FUNCTION</scope>
    <scope>DISRUPTION PHENOTYPE</scope>
</reference>
<reference key="17">
    <citation type="journal article" date="2008" name="PLoS ONE">
        <title>Identification of the bHLH factor Math6 as a novel component of the embryonic pancreas transcriptional network.</title>
        <authorList>
            <person name="Lynn F.C."/>
            <person name="Sanchez L."/>
            <person name="Gomis R."/>
            <person name="German M.S."/>
            <person name="Gasa R."/>
        </authorList>
    </citation>
    <scope>INTERACTION WITH ATOH8</scope>
</reference>
<reference key="18">
    <citation type="journal article" date="2009" name="Eur. J. Neurosci.">
        <title>Involvement of Ngn2, Tbr and NeuroD proteins during postnatal olfactory bulb neurogenesis.</title>
        <authorList>
            <person name="Roybon L."/>
            <person name="Deierborg T."/>
            <person name="Brundin P."/>
            <person name="Li J.Y."/>
        </authorList>
    </citation>
    <scope>FUNCTION</scope>
</reference>
<reference key="19">
    <citation type="journal article" date="2009" name="J. Biol. Chem.">
        <title>Cooperative transcriptional regulation of the essential pancreatic islet gene NeuroD1 (beta2) by Nkx2.2 and neurogenin 3.</title>
        <authorList>
            <person name="Anderson K.R."/>
            <person name="Torres C.A."/>
            <person name="Solomon K."/>
            <person name="Becker T.C."/>
            <person name="Newgard C.B."/>
            <person name="Wright C.V."/>
            <person name="Hagman J."/>
            <person name="Sussel L."/>
        </authorList>
    </citation>
    <scope>FUNCTION</scope>
    <scope>INDUCTION</scope>
    <scope>TISSUE SPECIFICITY</scope>
</reference>
<reference key="20">
    <citation type="journal article" date="2010" name="Mol. Pharmacol.">
        <title>mu-Opioid receptor agonists differentially regulate the expression of miR-190 and NeuroD.</title>
        <authorList>
            <person name="Zheng H."/>
            <person name="Zeng Y."/>
            <person name="Zhang X."/>
            <person name="Chu J."/>
            <person name="Loh H.H."/>
            <person name="Law P.Y."/>
        </authorList>
    </citation>
    <scope>INDUCTION</scope>
</reference>
<reference key="21">
    <citation type="journal article" date="2011" name="J. Neurosci.">
        <title>NeuroD factors regulate cell fate and neurite stratification in the developing retina.</title>
        <authorList>
            <person name="Cherry T.J."/>
            <person name="Wang S."/>
            <person name="Bormuth I."/>
            <person name="Schwab M."/>
            <person name="Olson J."/>
            <person name="Cepko C.L."/>
        </authorList>
    </citation>
    <scope>FUNCTION</scope>
    <scope>DEVELOPMENTAL STAGE</scope>
</reference>
<reference key="22">
    <citation type="journal article" date="2013" name="Cell Rep.">
        <title>Tcf15 primes pluripotent cells for differentiation.</title>
        <authorList>
            <person name="Davies O.R."/>
            <person name="Lin C.Y."/>
            <person name="Radzisheuskaya A."/>
            <person name="Zhou X."/>
            <person name="Taube J."/>
            <person name="Blin G."/>
            <person name="Waterhouse A."/>
            <person name="Smith A.J."/>
            <person name="Lowell S."/>
        </authorList>
    </citation>
    <scope>INTERACTION WITH TCF3</scope>
</reference>
<reference key="23">
    <citation type="journal article" date="2008" name="Biochemistry">
        <title>Crystal structure of E47-NeuroD1/beta2 bHLH domain-DNA complex: heterodimer selectivity and DNA recognition.</title>
        <authorList>
            <person name="Longo A."/>
            <person name="Guanga G.P."/>
            <person name="Rose R.B."/>
        </authorList>
    </citation>
    <scope>X-RAY CRYSTALLOGRAPHY (2.5 ANGSTROMS) OF 102-160 IN COMPLEX WITH TCF3 AND PROMOTER E-BOX DNA SEQUENCE</scope>
    <scope>SUBUNIT</scope>
</reference>
<feature type="chain" id="PRO_0000127383" description="Neurogenic differentiation factor 1">
    <location>
        <begin position="1"/>
        <end position="357"/>
    </location>
</feature>
<feature type="domain" description="bHLH" evidence="5">
    <location>
        <begin position="101"/>
        <end position="153"/>
    </location>
</feature>
<feature type="region of interest" description="Disordered" evidence="6">
    <location>
        <begin position="1"/>
        <end position="94"/>
    </location>
</feature>
<feature type="short sequence motif" description="Nuclear localization signal" evidence="4">
    <location>
        <begin position="87"/>
        <end position="93"/>
    </location>
</feature>
<feature type="compositionally biased region" description="Acidic residues" evidence="6">
    <location>
        <begin position="58"/>
        <end position="78"/>
    </location>
</feature>
<feature type="compositionally biased region" description="Basic residues" evidence="6">
    <location>
        <begin position="81"/>
        <end position="93"/>
    </location>
</feature>
<feature type="modified residue" description="Phosphoserine" evidence="12">
    <location>
        <position position="162"/>
    </location>
</feature>
<feature type="modified residue" description="Phosphoserine" evidence="12 15">
    <location>
        <position position="259"/>
    </location>
</feature>
<feature type="modified residue" description="Phosphoserine" evidence="12 15">
    <location>
        <position position="266"/>
    </location>
</feature>
<feature type="modified residue" description="Phosphoserine" evidence="12 15">
    <location>
        <position position="274"/>
    </location>
</feature>
<feature type="modified residue" description="Phosphoserine; by CaMK2" evidence="3">
    <location>
        <position position="336"/>
    </location>
</feature>
<feature type="mutagenesis site" description="Reduces weakly phosphorylation. Reduces strongly phosphorylation; when associated with A-259 and A-266." evidence="12">
    <original>S</original>
    <variation>A</variation>
    <location>
        <position position="162"/>
    </location>
</feature>
<feature type="mutagenesis site" description="Reduces weakly phosphorylation. Reduces strongly phosphorylation; when associated with A-162 and A-266. Reduces transactivation on the insulin promoter in glucose-stimulated insulinoma cells; when associated with A-266 and A-274." evidence="12 15">
    <original>S</original>
    <variation>A</variation>
    <location>
        <position position="259"/>
    </location>
</feature>
<feature type="mutagenesis site" description="Reduces weakly phosphorylation. Reduces strongly phosphorylation; when associated with A-162 and A-259. Reduces transactivation on the insulin promoter in glucose-stimulated insulinoma cells; when associated with A-259 and A-274." evidence="12 15">
    <original>S</original>
    <variation>A</variation>
    <location>
        <position position="266"/>
    </location>
</feature>
<feature type="mutagenesis site" description="Strongly reduces phosphorylation. Reduces transactivation on the insulin promoter in glucose-stimulated insulinoma cells; when associated with A-259 and A-266." evidence="12 15">
    <original>S</original>
    <variation>A</variation>
    <location>
        <position position="274"/>
    </location>
</feature>
<feature type="mutagenesis site" description="Promotes the formation of differentiated late retinal amacrine cells.">
    <original>I</original>
    <variation>V</variation>
    <location>
        <position position="279"/>
    </location>
</feature>
<feature type="helix" evidence="27">
    <location>
        <begin position="102"/>
        <end position="126"/>
    </location>
</feature>
<feature type="strand" evidence="27">
    <location>
        <begin position="128"/>
        <end position="130"/>
    </location>
</feature>
<feature type="strand" evidence="27">
    <location>
        <begin position="133"/>
        <end position="135"/>
    </location>
</feature>
<feature type="helix" evidence="27">
    <location>
        <begin position="139"/>
        <end position="156"/>
    </location>
</feature>
<evidence type="ECO:0000250" key="1"/>
<evidence type="ECO:0000250" key="2">
    <source>
        <dbReference type="UniProtKB" id="Q13562"/>
    </source>
</evidence>
<evidence type="ECO:0000250" key="3">
    <source>
        <dbReference type="UniProtKB" id="Q64289"/>
    </source>
</evidence>
<evidence type="ECO:0000255" key="4"/>
<evidence type="ECO:0000255" key="5">
    <source>
        <dbReference type="PROSITE-ProRule" id="PRU00981"/>
    </source>
</evidence>
<evidence type="ECO:0000256" key="6">
    <source>
        <dbReference type="SAM" id="MobiDB-lite"/>
    </source>
</evidence>
<evidence type="ECO:0000269" key="7">
    <source>
    </source>
</evidence>
<evidence type="ECO:0000269" key="8">
    <source>
    </source>
</evidence>
<evidence type="ECO:0000269" key="9">
    <source>
    </source>
</evidence>
<evidence type="ECO:0000269" key="10">
    <source>
    </source>
</evidence>
<evidence type="ECO:0000269" key="11">
    <source>
    </source>
</evidence>
<evidence type="ECO:0000269" key="12">
    <source>
    </source>
</evidence>
<evidence type="ECO:0000269" key="13">
    <source>
    </source>
</evidence>
<evidence type="ECO:0000269" key="14">
    <source>
    </source>
</evidence>
<evidence type="ECO:0000269" key="15">
    <source>
    </source>
</evidence>
<evidence type="ECO:0000269" key="16">
    <source>
    </source>
</evidence>
<evidence type="ECO:0000269" key="17">
    <source>
    </source>
</evidence>
<evidence type="ECO:0000269" key="18">
    <source>
    </source>
</evidence>
<evidence type="ECO:0000269" key="19">
    <source>
    </source>
</evidence>
<evidence type="ECO:0000269" key="20">
    <source>
    </source>
</evidence>
<evidence type="ECO:0000269" key="21">
    <source>
    </source>
</evidence>
<evidence type="ECO:0000269" key="22">
    <source>
    </source>
</evidence>
<evidence type="ECO:0000269" key="23">
    <source>
    </source>
</evidence>
<evidence type="ECO:0000269" key="24">
    <source>
    </source>
</evidence>
<evidence type="ECO:0000269" key="25">
    <source>
    </source>
</evidence>
<evidence type="ECO:0000269" key="26">
    <source>
    </source>
</evidence>
<evidence type="ECO:0007829" key="27">
    <source>
        <dbReference type="PDB" id="2QL2"/>
    </source>
</evidence>